<proteinExistence type="inferred from homology"/>
<reference key="1">
    <citation type="submission" date="2008-08" db="EMBL/GenBank/DDBJ databases">
        <title>The complete genome sequence of Coprothermobacter proteolyticus strain ATCC 5245 / DSM 5265 / BT.</title>
        <authorList>
            <person name="Dodson R.J."/>
            <person name="Durkin A.S."/>
            <person name="Wu M."/>
            <person name="Eisen J."/>
            <person name="Sutton G."/>
        </authorList>
    </citation>
    <scope>NUCLEOTIDE SEQUENCE [LARGE SCALE GENOMIC DNA]</scope>
    <source>
        <strain>ATCC 35245 / DSM 5265 / OCM 4 / BT</strain>
    </source>
</reference>
<gene>
    <name evidence="1" type="primary">groES</name>
    <name evidence="1" type="synonym">groS</name>
    <name type="ordered locus">COPRO5265_0635</name>
</gene>
<protein>
    <recommendedName>
        <fullName evidence="1">Co-chaperonin GroES</fullName>
    </recommendedName>
    <alternativeName>
        <fullName evidence="1">10 kDa chaperonin</fullName>
    </alternativeName>
    <alternativeName>
        <fullName evidence="1">Chaperonin-10</fullName>
        <shortName evidence="1">Cpn10</shortName>
    </alternativeName>
</protein>
<sequence>MEIKPLGDRVLLKPMEEEEKTKSGIVIPDTAKEKPQKGKVLAVGTGRTLDNGTRVPLEVQVGDIVVFSKYAGTEVKVDGEEYLIVSERDILAVVGHEN</sequence>
<comment type="function">
    <text evidence="1">Together with the chaperonin GroEL, plays an essential role in assisting protein folding. The GroEL-GroES system forms a nano-cage that allows encapsulation of the non-native substrate proteins and provides a physical environment optimized to promote and accelerate protein folding. GroES binds to the apical surface of the GroEL ring, thereby capping the opening of the GroEL channel.</text>
</comment>
<comment type="subunit">
    <text evidence="1">Heptamer of 7 subunits arranged in a ring. Interacts with the chaperonin GroEL.</text>
</comment>
<comment type="subcellular location">
    <subcellularLocation>
        <location evidence="1">Cytoplasm</location>
    </subcellularLocation>
</comment>
<comment type="similarity">
    <text evidence="1">Belongs to the GroES chaperonin family.</text>
</comment>
<feature type="chain" id="PRO_1000129644" description="Co-chaperonin GroES">
    <location>
        <begin position="1"/>
        <end position="98"/>
    </location>
</feature>
<accession>B5Y893</accession>
<name>CH10_COPPD</name>
<evidence type="ECO:0000255" key="1">
    <source>
        <dbReference type="HAMAP-Rule" id="MF_00580"/>
    </source>
</evidence>
<organism>
    <name type="scientific">Coprothermobacter proteolyticus (strain ATCC 35245 / DSM 5265 / OCM 4 / BT)</name>
    <dbReference type="NCBI Taxonomy" id="309798"/>
    <lineage>
        <taxon>Bacteria</taxon>
        <taxon>Pseudomonadati</taxon>
        <taxon>Coprothermobacterota</taxon>
        <taxon>Coprothermobacteria</taxon>
        <taxon>Coprothermobacterales</taxon>
        <taxon>Coprothermobacteraceae</taxon>
        <taxon>Coprothermobacter</taxon>
    </lineage>
</organism>
<dbReference type="EMBL" id="CP001145">
    <property type="protein sequence ID" value="ACI16960.1"/>
    <property type="molecule type" value="Genomic_DNA"/>
</dbReference>
<dbReference type="RefSeq" id="WP_012543612.1">
    <property type="nucleotide sequence ID" value="NC_011295.1"/>
</dbReference>
<dbReference type="SMR" id="B5Y893"/>
<dbReference type="STRING" id="309798.COPRO5265_0635"/>
<dbReference type="KEGG" id="cpo:COPRO5265_0635"/>
<dbReference type="eggNOG" id="COG0234">
    <property type="taxonomic scope" value="Bacteria"/>
</dbReference>
<dbReference type="HOGENOM" id="CLU_132825_2_0_9"/>
<dbReference type="OrthoDB" id="9806791at2"/>
<dbReference type="Proteomes" id="UP000001732">
    <property type="component" value="Chromosome"/>
</dbReference>
<dbReference type="GO" id="GO:0005737">
    <property type="term" value="C:cytoplasm"/>
    <property type="evidence" value="ECO:0007669"/>
    <property type="project" value="UniProtKB-SubCell"/>
</dbReference>
<dbReference type="GO" id="GO:0005524">
    <property type="term" value="F:ATP binding"/>
    <property type="evidence" value="ECO:0007669"/>
    <property type="project" value="InterPro"/>
</dbReference>
<dbReference type="GO" id="GO:0046872">
    <property type="term" value="F:metal ion binding"/>
    <property type="evidence" value="ECO:0007669"/>
    <property type="project" value="TreeGrafter"/>
</dbReference>
<dbReference type="GO" id="GO:0044183">
    <property type="term" value="F:protein folding chaperone"/>
    <property type="evidence" value="ECO:0007669"/>
    <property type="project" value="InterPro"/>
</dbReference>
<dbReference type="GO" id="GO:0051087">
    <property type="term" value="F:protein-folding chaperone binding"/>
    <property type="evidence" value="ECO:0007669"/>
    <property type="project" value="TreeGrafter"/>
</dbReference>
<dbReference type="GO" id="GO:0051082">
    <property type="term" value="F:unfolded protein binding"/>
    <property type="evidence" value="ECO:0007669"/>
    <property type="project" value="TreeGrafter"/>
</dbReference>
<dbReference type="GO" id="GO:0051085">
    <property type="term" value="P:chaperone cofactor-dependent protein refolding"/>
    <property type="evidence" value="ECO:0007669"/>
    <property type="project" value="TreeGrafter"/>
</dbReference>
<dbReference type="CDD" id="cd00320">
    <property type="entry name" value="cpn10"/>
    <property type="match status" value="1"/>
</dbReference>
<dbReference type="FunFam" id="2.30.33.40:FF:000001">
    <property type="entry name" value="10 kDa chaperonin"/>
    <property type="match status" value="1"/>
</dbReference>
<dbReference type="Gene3D" id="2.30.33.40">
    <property type="entry name" value="GroES chaperonin"/>
    <property type="match status" value="1"/>
</dbReference>
<dbReference type="HAMAP" id="MF_00580">
    <property type="entry name" value="CH10"/>
    <property type="match status" value="1"/>
</dbReference>
<dbReference type="InterPro" id="IPR020818">
    <property type="entry name" value="Chaperonin_GroES"/>
</dbReference>
<dbReference type="InterPro" id="IPR037124">
    <property type="entry name" value="Chaperonin_GroES_sf"/>
</dbReference>
<dbReference type="InterPro" id="IPR018369">
    <property type="entry name" value="Chaprnonin_Cpn10_CS"/>
</dbReference>
<dbReference type="InterPro" id="IPR011032">
    <property type="entry name" value="GroES-like_sf"/>
</dbReference>
<dbReference type="NCBIfam" id="NF001527">
    <property type="entry name" value="PRK00364.1-2"/>
    <property type="match status" value="1"/>
</dbReference>
<dbReference type="NCBIfam" id="NF001530">
    <property type="entry name" value="PRK00364.1-6"/>
    <property type="match status" value="1"/>
</dbReference>
<dbReference type="NCBIfam" id="NF001531">
    <property type="entry name" value="PRK00364.2-2"/>
    <property type="match status" value="1"/>
</dbReference>
<dbReference type="NCBIfam" id="NF001533">
    <property type="entry name" value="PRK00364.2-4"/>
    <property type="match status" value="1"/>
</dbReference>
<dbReference type="NCBIfam" id="NF001534">
    <property type="entry name" value="PRK00364.2-5"/>
    <property type="match status" value="1"/>
</dbReference>
<dbReference type="PANTHER" id="PTHR10772">
    <property type="entry name" value="10 KDA HEAT SHOCK PROTEIN"/>
    <property type="match status" value="1"/>
</dbReference>
<dbReference type="PANTHER" id="PTHR10772:SF58">
    <property type="entry name" value="CO-CHAPERONIN GROES"/>
    <property type="match status" value="1"/>
</dbReference>
<dbReference type="Pfam" id="PF00166">
    <property type="entry name" value="Cpn10"/>
    <property type="match status" value="1"/>
</dbReference>
<dbReference type="PRINTS" id="PR00297">
    <property type="entry name" value="CHAPERONIN10"/>
</dbReference>
<dbReference type="SMART" id="SM00883">
    <property type="entry name" value="Cpn10"/>
    <property type="match status" value="1"/>
</dbReference>
<dbReference type="SUPFAM" id="SSF50129">
    <property type="entry name" value="GroES-like"/>
    <property type="match status" value="1"/>
</dbReference>
<dbReference type="PROSITE" id="PS00681">
    <property type="entry name" value="CHAPERONINS_CPN10"/>
    <property type="match status" value="1"/>
</dbReference>
<keyword id="KW-0143">Chaperone</keyword>
<keyword id="KW-0963">Cytoplasm</keyword>
<keyword id="KW-1185">Reference proteome</keyword>